<feature type="chain" id="PRO_0000446174" description="Probable alcohol acetyltransferase">
    <location>
        <begin position="1"/>
        <end position="371"/>
    </location>
</feature>
<feature type="region of interest" description="Disordered" evidence="2">
    <location>
        <begin position="325"/>
        <end position="352"/>
    </location>
</feature>
<feature type="compositionally biased region" description="Basic and acidic residues" evidence="2">
    <location>
        <begin position="327"/>
        <end position="336"/>
    </location>
</feature>
<feature type="active site" description="Charge relay system" evidence="1">
    <location>
        <position position="124"/>
    </location>
</feature>
<feature type="active site" description="Charge relay system" evidence="1">
    <location>
        <position position="295"/>
    </location>
</feature>
<accession>A0A061AYY2</accession>
<keyword id="KW-0378">Hydrolase</keyword>
<keyword id="KW-1185">Reference proteome</keyword>
<keyword id="KW-0808">Transferase</keyword>
<protein>
    <recommendedName>
        <fullName>Probable alcohol acetyltransferase</fullName>
        <shortName>AAT</shortName>
        <ecNumber>2.3.1.-</ecNumber>
    </recommendedName>
</protein>
<proteinExistence type="inferred from homology"/>
<comment type="function">
    <text evidence="3 5">Probable alcohol acetyltransferase that uses acetyl-CoA to synthesize acetate esters from various alcohols (Probable). Not involved in the synthesis of ethyl acetate (PubMed:28356220).</text>
</comment>
<comment type="similarity">
    <text evidence="4">Belongs to the AB hydrolase superfamily.</text>
</comment>
<organism>
    <name type="scientific">Cyberlindnera fabianii</name>
    <name type="common">Yeast</name>
    <name type="synonym">Hansenula fabianii</name>
    <dbReference type="NCBI Taxonomy" id="36022"/>
    <lineage>
        <taxon>Eukaryota</taxon>
        <taxon>Fungi</taxon>
        <taxon>Dikarya</taxon>
        <taxon>Ascomycota</taxon>
        <taxon>Saccharomycotina</taxon>
        <taxon>Saccharomycetes</taxon>
        <taxon>Phaffomycetales</taxon>
        <taxon>Phaffomycetaceae</taxon>
        <taxon>Cyberlindnera</taxon>
    </lineage>
</organism>
<sequence length="371" mass="42144">MRSTSLLMQAKAAIPDIKQLPTKHKVSLAYTIHWPHKTVNPNINIKPREPVIFLHGVFGSKKNYRDYCQTIANQNYTPVYSLDFRNHGESEHAFPLVNYSTLTQDVVDFIHEHKLEKVDIVGYSLGAKVALLTLLKHPELCRSGVIIGNAPIKTPQVKVYLKAFIKALKALGDKRPEIKSNDKAWRAKARDVMRKYIPDGDILHYLLRNIDIRKPKNITEYKPGTINFSMPISHFDNKVVEDIADWPEEEVEGLKFEGPVRVIRGTQSVFINDKGLAAYQKHFPNYTLTNFNSNHLIWAERPLQVTKVVSDFLKKTRLLEMDGSAKALEESPKESYSRPPAHQQPLHKNDFTHIDVGALPVNGAQAESTQA</sequence>
<name>EAT2_CYBFA</name>
<reference key="1">
    <citation type="journal article" date="2014" name="Genome Announc.">
        <title>Genome sequence of the yeast Cyberlindnera fabianii (Hansenula fabianii).</title>
        <authorList>
            <person name="Freel K.C."/>
            <person name="Sarilar V."/>
            <person name="Neuveglise C."/>
            <person name="Devillers H."/>
            <person name="Friedrich A."/>
            <person name="Schacherer J."/>
        </authorList>
    </citation>
    <scope>NUCLEOTIDE SEQUENCE [LARGE SCALE GENOMIC DNA]</scope>
    <source>
        <strain>YJS4271</strain>
    </source>
</reference>
<reference key="2">
    <citation type="journal article" date="2017" name="Genome Announc.">
        <title>Genome sequences of Cyberlindnera fabianii 65, Pichia kudriavzevii 129, and Saccharomyces cerevisiae 131 isolated from fermented masau fruits in Zimbabwe.</title>
        <authorList>
            <person name="van Rijswijck I.M.H."/>
            <person name="Derks M.F.L."/>
            <person name="Abee T."/>
            <person name="de Ridder D."/>
            <person name="Smid E.J."/>
        </authorList>
    </citation>
    <scope>NUCLEOTIDE SEQUENCE [LARGE SCALE GENOMIC DNA]</scope>
    <source>
        <strain>65</strain>
    </source>
</reference>
<reference key="3">
    <citation type="journal article" date="2017" name="Metab. Eng.">
        <title>Ethyl acetate production by the elusive alcohol acetyltransferase from yeast.</title>
        <authorList>
            <person name="Kruis A.J."/>
            <person name="Levisson M."/>
            <person name="Mars A.E."/>
            <person name="van der Ploeg M."/>
            <person name="Garces Daza F."/>
            <person name="Ellena V."/>
            <person name="Kengen S.W.M."/>
            <person name="van der Oost J."/>
            <person name="Weusthuis R.A."/>
        </authorList>
    </citation>
    <scope>FUNCTION</scope>
    <source>
        <strain>CBS 5640</strain>
    </source>
</reference>
<dbReference type="EC" id="2.3.1.-"/>
<dbReference type="EMBL" id="LK052890">
    <property type="protein sequence ID" value="CDR40574.1"/>
    <property type="molecule type" value="Genomic_DNA"/>
</dbReference>
<dbReference type="EMBL" id="MPUK01000003">
    <property type="protein sequence ID" value="ONH67986.1"/>
    <property type="molecule type" value="Genomic_DNA"/>
</dbReference>
<dbReference type="SMR" id="A0A061AYY2"/>
<dbReference type="STRING" id="36022.A0A061AYY2"/>
<dbReference type="ESTHER" id="cybfa-a0a061ayy2">
    <property type="family name" value="ABHD11-Acetyl_transferase"/>
</dbReference>
<dbReference type="VEuPathDB" id="FungiDB:BON22_2183"/>
<dbReference type="OMA" id="KPYDYIT"/>
<dbReference type="OrthoDB" id="8119704at2759"/>
<dbReference type="PhylomeDB" id="A0A061AYY2"/>
<dbReference type="Proteomes" id="UP000189513">
    <property type="component" value="Unassembled WGS sequence"/>
</dbReference>
<dbReference type="GO" id="GO:0005739">
    <property type="term" value="C:mitochondrion"/>
    <property type="evidence" value="ECO:0007669"/>
    <property type="project" value="TreeGrafter"/>
</dbReference>
<dbReference type="GO" id="GO:0052689">
    <property type="term" value="F:carboxylic ester hydrolase activity"/>
    <property type="evidence" value="ECO:0007669"/>
    <property type="project" value="TreeGrafter"/>
</dbReference>
<dbReference type="GO" id="GO:0016740">
    <property type="term" value="F:transferase activity"/>
    <property type="evidence" value="ECO:0007669"/>
    <property type="project" value="UniProtKB-KW"/>
</dbReference>
<dbReference type="Gene3D" id="3.40.50.1820">
    <property type="entry name" value="alpha/beta hydrolase"/>
    <property type="match status" value="1"/>
</dbReference>
<dbReference type="InterPro" id="IPR000073">
    <property type="entry name" value="AB_hydrolase_1"/>
</dbReference>
<dbReference type="InterPro" id="IPR029058">
    <property type="entry name" value="AB_hydrolase_fold"/>
</dbReference>
<dbReference type="PANTHER" id="PTHR46118">
    <property type="entry name" value="PROTEIN ABHD11"/>
    <property type="match status" value="1"/>
</dbReference>
<dbReference type="PANTHER" id="PTHR46118:SF4">
    <property type="entry name" value="PROTEIN ABHD11"/>
    <property type="match status" value="1"/>
</dbReference>
<dbReference type="Pfam" id="PF00561">
    <property type="entry name" value="Abhydrolase_1"/>
    <property type="match status" value="1"/>
</dbReference>
<dbReference type="SUPFAM" id="SSF53474">
    <property type="entry name" value="alpha/beta-Hydrolases"/>
    <property type="match status" value="1"/>
</dbReference>
<gene>
    <name type="primary">EAT2</name>
    <name type="ORF">BON22_2183</name>
    <name type="ORF">CYFA0S_05e02014g</name>
</gene>
<evidence type="ECO:0000250" key="1">
    <source>
        <dbReference type="UniProtKB" id="A0A1E3P8S6"/>
    </source>
</evidence>
<evidence type="ECO:0000256" key="2">
    <source>
        <dbReference type="SAM" id="MobiDB-lite"/>
    </source>
</evidence>
<evidence type="ECO:0000269" key="3">
    <source>
    </source>
</evidence>
<evidence type="ECO:0000305" key="4"/>
<evidence type="ECO:0000305" key="5">
    <source>
    </source>
</evidence>